<protein>
    <recommendedName>
        <fullName evidence="1">6,7-dimethyl-8-ribityllumazine synthase</fullName>
        <shortName evidence="1">DMRL synthase</shortName>
        <shortName evidence="1">LS</shortName>
        <shortName evidence="1">Lumazine synthase</shortName>
        <ecNumber evidence="1">2.5.1.78</ecNumber>
    </recommendedName>
</protein>
<proteinExistence type="inferred from homology"/>
<comment type="function">
    <text evidence="1">Catalyzes the formation of 6,7-dimethyl-8-ribityllumazine by condensation of 5-amino-6-(D-ribitylamino)uracil with 3,4-dihydroxy-2-butanone 4-phosphate. This is the penultimate step in the biosynthesis of riboflavin.</text>
</comment>
<comment type="catalytic activity">
    <reaction evidence="1">
        <text>(2S)-2-hydroxy-3-oxobutyl phosphate + 5-amino-6-(D-ribitylamino)uracil = 6,7-dimethyl-8-(1-D-ribityl)lumazine + phosphate + 2 H2O + H(+)</text>
        <dbReference type="Rhea" id="RHEA:26152"/>
        <dbReference type="ChEBI" id="CHEBI:15377"/>
        <dbReference type="ChEBI" id="CHEBI:15378"/>
        <dbReference type="ChEBI" id="CHEBI:15934"/>
        <dbReference type="ChEBI" id="CHEBI:43474"/>
        <dbReference type="ChEBI" id="CHEBI:58201"/>
        <dbReference type="ChEBI" id="CHEBI:58830"/>
        <dbReference type="EC" id="2.5.1.78"/>
    </reaction>
</comment>
<comment type="pathway">
    <text evidence="1">Cofactor biosynthesis; riboflavin biosynthesis; riboflavin from 2-hydroxy-3-oxobutyl phosphate and 5-amino-6-(D-ribitylamino)uracil: step 1/2.</text>
</comment>
<comment type="similarity">
    <text evidence="1">Belongs to the DMRL synthase family.</text>
</comment>
<keyword id="KW-1185">Reference proteome</keyword>
<keyword id="KW-0686">Riboflavin biosynthesis</keyword>
<keyword id="KW-0808">Transferase</keyword>
<sequence length="140" mass="14721">MARFLIVEARFYDHLNDMLVAGARAALEAEGHEAEVLTVPGALEVPGAIAMAAENGEFDGFVAIGVVIRGETYHFEIVAGESARGILALTMDGIAIGNGILTTENEEQALERADPARKDKGGEAAKAAIALLKLQDRFGA</sequence>
<dbReference type="EC" id="2.5.1.78" evidence="1"/>
<dbReference type="EMBL" id="CP000157">
    <property type="protein sequence ID" value="ABC63244.1"/>
    <property type="molecule type" value="Genomic_DNA"/>
</dbReference>
<dbReference type="RefSeq" id="WP_011414080.1">
    <property type="nucleotide sequence ID" value="NC_007722.1"/>
</dbReference>
<dbReference type="SMR" id="Q2NAP7"/>
<dbReference type="STRING" id="314225.ELI_05760"/>
<dbReference type="KEGG" id="eli:ELI_05760"/>
<dbReference type="eggNOG" id="COG0054">
    <property type="taxonomic scope" value="Bacteria"/>
</dbReference>
<dbReference type="HOGENOM" id="CLU_089358_1_2_5"/>
<dbReference type="OrthoDB" id="9809709at2"/>
<dbReference type="UniPathway" id="UPA00275">
    <property type="reaction ID" value="UER00404"/>
</dbReference>
<dbReference type="Proteomes" id="UP000008808">
    <property type="component" value="Chromosome"/>
</dbReference>
<dbReference type="GO" id="GO:0005829">
    <property type="term" value="C:cytosol"/>
    <property type="evidence" value="ECO:0007669"/>
    <property type="project" value="TreeGrafter"/>
</dbReference>
<dbReference type="GO" id="GO:0009349">
    <property type="term" value="C:riboflavin synthase complex"/>
    <property type="evidence" value="ECO:0007669"/>
    <property type="project" value="InterPro"/>
</dbReference>
<dbReference type="GO" id="GO:0000906">
    <property type="term" value="F:6,7-dimethyl-8-ribityllumazine synthase activity"/>
    <property type="evidence" value="ECO:0007669"/>
    <property type="project" value="UniProtKB-UniRule"/>
</dbReference>
<dbReference type="GO" id="GO:0009231">
    <property type="term" value="P:riboflavin biosynthetic process"/>
    <property type="evidence" value="ECO:0007669"/>
    <property type="project" value="UniProtKB-UniRule"/>
</dbReference>
<dbReference type="CDD" id="cd09209">
    <property type="entry name" value="Lumazine_synthase-I"/>
    <property type="match status" value="1"/>
</dbReference>
<dbReference type="Gene3D" id="3.40.50.960">
    <property type="entry name" value="Lumazine/riboflavin synthase"/>
    <property type="match status" value="1"/>
</dbReference>
<dbReference type="HAMAP" id="MF_00178">
    <property type="entry name" value="Lumazine_synth"/>
    <property type="match status" value="1"/>
</dbReference>
<dbReference type="InterPro" id="IPR034964">
    <property type="entry name" value="LS"/>
</dbReference>
<dbReference type="InterPro" id="IPR002180">
    <property type="entry name" value="LS/RS"/>
</dbReference>
<dbReference type="InterPro" id="IPR036467">
    <property type="entry name" value="LS/RS_sf"/>
</dbReference>
<dbReference type="NCBIfam" id="TIGR00114">
    <property type="entry name" value="lumazine-synth"/>
    <property type="match status" value="1"/>
</dbReference>
<dbReference type="PANTHER" id="PTHR21058:SF0">
    <property type="entry name" value="6,7-DIMETHYL-8-RIBITYLLUMAZINE SYNTHASE"/>
    <property type="match status" value="1"/>
</dbReference>
<dbReference type="PANTHER" id="PTHR21058">
    <property type="entry name" value="6,7-DIMETHYL-8-RIBITYLLUMAZINE SYNTHASE DMRL SYNTHASE LUMAZINE SYNTHASE"/>
    <property type="match status" value="1"/>
</dbReference>
<dbReference type="Pfam" id="PF00885">
    <property type="entry name" value="DMRL_synthase"/>
    <property type="match status" value="1"/>
</dbReference>
<dbReference type="SUPFAM" id="SSF52121">
    <property type="entry name" value="Lumazine synthase"/>
    <property type="match status" value="1"/>
</dbReference>
<organism>
    <name type="scientific">Erythrobacter litoralis (strain HTCC2594)</name>
    <dbReference type="NCBI Taxonomy" id="314225"/>
    <lineage>
        <taxon>Bacteria</taxon>
        <taxon>Pseudomonadati</taxon>
        <taxon>Pseudomonadota</taxon>
        <taxon>Alphaproteobacteria</taxon>
        <taxon>Sphingomonadales</taxon>
        <taxon>Erythrobacteraceae</taxon>
        <taxon>Erythrobacter/Porphyrobacter group</taxon>
        <taxon>Erythrobacter</taxon>
    </lineage>
</organism>
<gene>
    <name evidence="1" type="primary">ribH</name>
    <name type="ordered locus">ELI_05760</name>
</gene>
<evidence type="ECO:0000255" key="1">
    <source>
        <dbReference type="HAMAP-Rule" id="MF_00178"/>
    </source>
</evidence>
<name>RISB_ERYLH</name>
<accession>Q2NAP7</accession>
<feature type="chain" id="PRO_1000098191" description="6,7-dimethyl-8-ribityllumazine synthase">
    <location>
        <begin position="1"/>
        <end position="140"/>
    </location>
</feature>
<feature type="active site" description="Proton donor" evidence="1">
    <location>
        <position position="74"/>
    </location>
</feature>
<feature type="binding site" evidence="1">
    <location>
        <position position="11"/>
    </location>
    <ligand>
        <name>5-amino-6-(D-ribitylamino)uracil</name>
        <dbReference type="ChEBI" id="CHEBI:15934"/>
    </ligand>
</feature>
<feature type="binding site" evidence="1">
    <location>
        <begin position="42"/>
        <end position="44"/>
    </location>
    <ligand>
        <name>5-amino-6-(D-ribitylamino)uracil</name>
        <dbReference type="ChEBI" id="CHEBI:15934"/>
    </ligand>
</feature>
<feature type="binding site" evidence="1">
    <location>
        <begin position="66"/>
        <end position="68"/>
    </location>
    <ligand>
        <name>5-amino-6-(D-ribitylamino)uracil</name>
        <dbReference type="ChEBI" id="CHEBI:15934"/>
    </ligand>
</feature>
<feature type="binding site" evidence="1">
    <location>
        <begin position="71"/>
        <end position="72"/>
    </location>
    <ligand>
        <name>(2S)-2-hydroxy-3-oxobutyl phosphate</name>
        <dbReference type="ChEBI" id="CHEBI:58830"/>
    </ligand>
</feature>
<feature type="binding site" evidence="1">
    <location>
        <position position="98"/>
    </location>
    <ligand>
        <name>5-amino-6-(D-ribitylamino)uracil</name>
        <dbReference type="ChEBI" id="CHEBI:15934"/>
    </ligand>
</feature>
<feature type="binding site" evidence="1">
    <location>
        <position position="112"/>
    </location>
    <ligand>
        <name>(2S)-2-hydroxy-3-oxobutyl phosphate</name>
        <dbReference type="ChEBI" id="CHEBI:58830"/>
    </ligand>
</feature>
<reference key="1">
    <citation type="journal article" date="2009" name="J. Bacteriol.">
        <title>Complete genome sequence of Erythrobacter litoralis HTCC2594.</title>
        <authorList>
            <person name="Oh H.M."/>
            <person name="Giovannoni S.J."/>
            <person name="Ferriera S."/>
            <person name="Johnson J."/>
            <person name="Cho J.C."/>
        </authorList>
    </citation>
    <scope>NUCLEOTIDE SEQUENCE [LARGE SCALE GENOMIC DNA]</scope>
    <source>
        <strain>HTCC2594</strain>
    </source>
</reference>